<accession>Q38829</accession>
<accession>Q8LPJ8</accession>
<reference key="1">
    <citation type="journal article" date="1995" name="J. Mol. Biol.">
        <title>The PS-IAA4/5-like family of early auxin-inducible mRNAs in Arabidopsis thaliana.</title>
        <authorList>
            <person name="Abel S."/>
            <person name="Nguyen M.D."/>
            <person name="Theologis A."/>
        </authorList>
    </citation>
    <scope>NUCLEOTIDE SEQUENCE [MRNA]</scope>
    <scope>TISSUE SPECIFICITY</scope>
    <scope>INDUCTION</scope>
    <source>
        <strain>cv. Columbia</strain>
    </source>
</reference>
<reference key="2">
    <citation type="journal article" date="1999" name="Nature">
        <title>Sequence and analysis of chromosome 4 of the plant Arabidopsis thaliana.</title>
        <authorList>
            <person name="Mayer K.F.X."/>
            <person name="Schueller C."/>
            <person name="Wambutt R."/>
            <person name="Murphy G."/>
            <person name="Volckaert G."/>
            <person name="Pohl T."/>
            <person name="Duesterhoeft A."/>
            <person name="Stiekema W."/>
            <person name="Entian K.-D."/>
            <person name="Terryn N."/>
            <person name="Harris B."/>
            <person name="Ansorge W."/>
            <person name="Brandt P."/>
            <person name="Grivell L.A."/>
            <person name="Rieger M."/>
            <person name="Weichselgartner M."/>
            <person name="de Simone V."/>
            <person name="Obermaier B."/>
            <person name="Mache R."/>
            <person name="Mueller M."/>
            <person name="Kreis M."/>
            <person name="Delseny M."/>
            <person name="Puigdomenech P."/>
            <person name="Watson M."/>
            <person name="Schmidtheini T."/>
            <person name="Reichert B."/>
            <person name="Portetelle D."/>
            <person name="Perez-Alonso M."/>
            <person name="Boutry M."/>
            <person name="Bancroft I."/>
            <person name="Vos P."/>
            <person name="Hoheisel J."/>
            <person name="Zimmermann W."/>
            <person name="Wedler H."/>
            <person name="Ridley P."/>
            <person name="Langham S.-A."/>
            <person name="McCullagh B."/>
            <person name="Bilham L."/>
            <person name="Robben J."/>
            <person name="van der Schueren J."/>
            <person name="Grymonprez B."/>
            <person name="Chuang Y.-J."/>
            <person name="Vandenbussche F."/>
            <person name="Braeken M."/>
            <person name="Weltjens I."/>
            <person name="Voet M."/>
            <person name="Bastiaens I."/>
            <person name="Aert R."/>
            <person name="Defoor E."/>
            <person name="Weitzenegger T."/>
            <person name="Bothe G."/>
            <person name="Ramsperger U."/>
            <person name="Hilbert H."/>
            <person name="Braun M."/>
            <person name="Holzer E."/>
            <person name="Brandt A."/>
            <person name="Peters S."/>
            <person name="van Staveren M."/>
            <person name="Dirkse W."/>
            <person name="Mooijman P."/>
            <person name="Klein Lankhorst R."/>
            <person name="Rose M."/>
            <person name="Hauf J."/>
            <person name="Koetter P."/>
            <person name="Berneiser S."/>
            <person name="Hempel S."/>
            <person name="Feldpausch M."/>
            <person name="Lamberth S."/>
            <person name="Van den Daele H."/>
            <person name="De Keyser A."/>
            <person name="Buysshaert C."/>
            <person name="Gielen J."/>
            <person name="Villarroel R."/>
            <person name="De Clercq R."/>
            <person name="van Montagu M."/>
            <person name="Rogers J."/>
            <person name="Cronin A."/>
            <person name="Quail M.A."/>
            <person name="Bray-Allen S."/>
            <person name="Clark L."/>
            <person name="Doggett J."/>
            <person name="Hall S."/>
            <person name="Kay M."/>
            <person name="Lennard N."/>
            <person name="McLay K."/>
            <person name="Mayes R."/>
            <person name="Pettett A."/>
            <person name="Rajandream M.A."/>
            <person name="Lyne M."/>
            <person name="Benes V."/>
            <person name="Rechmann S."/>
            <person name="Borkova D."/>
            <person name="Bloecker H."/>
            <person name="Scharfe M."/>
            <person name="Grimm M."/>
            <person name="Loehnert T.-H."/>
            <person name="Dose S."/>
            <person name="de Haan M."/>
            <person name="Maarse A.C."/>
            <person name="Schaefer M."/>
            <person name="Mueller-Auer S."/>
            <person name="Gabel C."/>
            <person name="Fuchs M."/>
            <person name="Fartmann B."/>
            <person name="Granderath K."/>
            <person name="Dauner D."/>
            <person name="Herzl A."/>
            <person name="Neumann S."/>
            <person name="Argiriou A."/>
            <person name="Vitale D."/>
            <person name="Liguori R."/>
            <person name="Piravandi E."/>
            <person name="Massenet O."/>
            <person name="Quigley F."/>
            <person name="Clabauld G."/>
            <person name="Muendlein A."/>
            <person name="Felber R."/>
            <person name="Schnabl S."/>
            <person name="Hiller R."/>
            <person name="Schmidt W."/>
            <person name="Lecharny A."/>
            <person name="Aubourg S."/>
            <person name="Chefdor F."/>
            <person name="Cooke R."/>
            <person name="Berger C."/>
            <person name="Monfort A."/>
            <person name="Casacuberta E."/>
            <person name="Gibbons T."/>
            <person name="Weber N."/>
            <person name="Vandenbol M."/>
            <person name="Bargues M."/>
            <person name="Terol J."/>
            <person name="Torres A."/>
            <person name="Perez-Perez A."/>
            <person name="Purnelle B."/>
            <person name="Bent E."/>
            <person name="Johnson S."/>
            <person name="Tacon D."/>
            <person name="Jesse T."/>
            <person name="Heijnen L."/>
            <person name="Schwarz S."/>
            <person name="Scholler P."/>
            <person name="Heber S."/>
            <person name="Francs P."/>
            <person name="Bielke C."/>
            <person name="Frishman D."/>
            <person name="Haase D."/>
            <person name="Lemcke K."/>
            <person name="Mewes H.-W."/>
            <person name="Stocker S."/>
            <person name="Zaccaria P."/>
            <person name="Bevan M."/>
            <person name="Wilson R.K."/>
            <person name="de la Bastide M."/>
            <person name="Habermann K."/>
            <person name="Parnell L."/>
            <person name="Dedhia N."/>
            <person name="Gnoj L."/>
            <person name="Schutz K."/>
            <person name="Huang E."/>
            <person name="Spiegel L."/>
            <person name="Sekhon M."/>
            <person name="Murray J."/>
            <person name="Sheet P."/>
            <person name="Cordes M."/>
            <person name="Abu-Threideh J."/>
            <person name="Stoneking T."/>
            <person name="Kalicki J."/>
            <person name="Graves T."/>
            <person name="Harmon G."/>
            <person name="Edwards J."/>
            <person name="Latreille P."/>
            <person name="Courtney L."/>
            <person name="Cloud J."/>
            <person name="Abbott A."/>
            <person name="Scott K."/>
            <person name="Johnson D."/>
            <person name="Minx P."/>
            <person name="Bentley D."/>
            <person name="Fulton B."/>
            <person name="Miller N."/>
            <person name="Greco T."/>
            <person name="Kemp K."/>
            <person name="Kramer J."/>
            <person name="Fulton L."/>
            <person name="Mardis E."/>
            <person name="Dante M."/>
            <person name="Pepin K."/>
            <person name="Hillier L.W."/>
            <person name="Nelson J."/>
            <person name="Spieth J."/>
            <person name="Ryan E."/>
            <person name="Andrews S."/>
            <person name="Geisel C."/>
            <person name="Layman D."/>
            <person name="Du H."/>
            <person name="Ali J."/>
            <person name="Berghoff A."/>
            <person name="Jones K."/>
            <person name="Drone K."/>
            <person name="Cotton M."/>
            <person name="Joshu C."/>
            <person name="Antonoiu B."/>
            <person name="Zidanic M."/>
            <person name="Strong C."/>
            <person name="Sun H."/>
            <person name="Lamar B."/>
            <person name="Yordan C."/>
            <person name="Ma P."/>
            <person name="Zhong J."/>
            <person name="Preston R."/>
            <person name="Vil D."/>
            <person name="Shekher M."/>
            <person name="Matero A."/>
            <person name="Shah R."/>
            <person name="Swaby I.K."/>
            <person name="O'Shaughnessy A."/>
            <person name="Rodriguez M."/>
            <person name="Hoffman J."/>
            <person name="Till S."/>
            <person name="Granat S."/>
            <person name="Shohdy N."/>
            <person name="Hasegawa A."/>
            <person name="Hameed A."/>
            <person name="Lodhi M."/>
            <person name="Johnson A."/>
            <person name="Chen E."/>
            <person name="Marra M.A."/>
            <person name="Martienssen R."/>
            <person name="McCombie W.R."/>
        </authorList>
    </citation>
    <scope>NUCLEOTIDE SEQUENCE [LARGE SCALE GENOMIC DNA]</scope>
    <source>
        <strain>cv. Columbia</strain>
    </source>
</reference>
<reference key="3">
    <citation type="journal article" date="2017" name="Plant J.">
        <title>Araport11: a complete reannotation of the Arabidopsis thaliana reference genome.</title>
        <authorList>
            <person name="Cheng C.Y."/>
            <person name="Krishnakumar V."/>
            <person name="Chan A.P."/>
            <person name="Thibaud-Nissen F."/>
            <person name="Schobel S."/>
            <person name="Town C.D."/>
        </authorList>
    </citation>
    <scope>GENOME REANNOTATION</scope>
    <source>
        <strain>cv. Columbia</strain>
    </source>
</reference>
<reference key="4">
    <citation type="journal article" date="2002" name="Science">
        <title>Functional annotation of a full-length Arabidopsis cDNA collection.</title>
        <authorList>
            <person name="Seki M."/>
            <person name="Narusaka M."/>
            <person name="Kamiya A."/>
            <person name="Ishida J."/>
            <person name="Satou M."/>
            <person name="Sakurai T."/>
            <person name="Nakajima M."/>
            <person name="Enju A."/>
            <person name="Akiyama K."/>
            <person name="Oono Y."/>
            <person name="Muramatsu M."/>
            <person name="Hayashizaki Y."/>
            <person name="Kawai J."/>
            <person name="Carninci P."/>
            <person name="Itoh M."/>
            <person name="Ishii Y."/>
            <person name="Arakawa T."/>
            <person name="Shibata K."/>
            <person name="Shinagawa A."/>
            <person name="Shinozaki K."/>
        </authorList>
    </citation>
    <scope>NUCLEOTIDE SEQUENCE [LARGE SCALE MRNA]</scope>
    <source>
        <strain>cv. Columbia</strain>
    </source>
</reference>
<reference key="5">
    <citation type="journal article" date="2003" name="Science">
        <title>Empirical analysis of transcriptional activity in the Arabidopsis genome.</title>
        <authorList>
            <person name="Yamada K."/>
            <person name="Lim J."/>
            <person name="Dale J.M."/>
            <person name="Chen H."/>
            <person name="Shinn P."/>
            <person name="Palm C.J."/>
            <person name="Southwick A.M."/>
            <person name="Wu H.C."/>
            <person name="Kim C.J."/>
            <person name="Nguyen M."/>
            <person name="Pham P.K."/>
            <person name="Cheuk R.F."/>
            <person name="Karlin-Newmann G."/>
            <person name="Liu S.X."/>
            <person name="Lam B."/>
            <person name="Sakano H."/>
            <person name="Wu T."/>
            <person name="Yu G."/>
            <person name="Miranda M."/>
            <person name="Quach H.L."/>
            <person name="Tripp M."/>
            <person name="Chang C.H."/>
            <person name="Lee J.M."/>
            <person name="Toriumi M.J."/>
            <person name="Chan M.M."/>
            <person name="Tang C.C."/>
            <person name="Onodera C.S."/>
            <person name="Deng J.M."/>
            <person name="Akiyama K."/>
            <person name="Ansari Y."/>
            <person name="Arakawa T."/>
            <person name="Banh J."/>
            <person name="Banno F."/>
            <person name="Bowser L."/>
            <person name="Brooks S.Y."/>
            <person name="Carninci P."/>
            <person name="Chao Q."/>
            <person name="Choy N."/>
            <person name="Enju A."/>
            <person name="Goldsmith A.D."/>
            <person name="Gurjal M."/>
            <person name="Hansen N.F."/>
            <person name="Hayashizaki Y."/>
            <person name="Johnson-Hopson C."/>
            <person name="Hsuan V.W."/>
            <person name="Iida K."/>
            <person name="Karnes M."/>
            <person name="Khan S."/>
            <person name="Koesema E."/>
            <person name="Ishida J."/>
            <person name="Jiang P.X."/>
            <person name="Jones T."/>
            <person name="Kawai J."/>
            <person name="Kamiya A."/>
            <person name="Meyers C."/>
            <person name="Nakajima M."/>
            <person name="Narusaka M."/>
            <person name="Seki M."/>
            <person name="Sakurai T."/>
            <person name="Satou M."/>
            <person name="Tamse R."/>
            <person name="Vaysberg M."/>
            <person name="Wallender E.K."/>
            <person name="Wong C."/>
            <person name="Yamamura Y."/>
            <person name="Yuan S."/>
            <person name="Shinozaki K."/>
            <person name="Davis R.W."/>
            <person name="Theologis A."/>
            <person name="Ecker J.R."/>
        </authorList>
    </citation>
    <scope>NUCLEOTIDE SEQUENCE [LARGE SCALE MRNA]</scope>
    <source>
        <strain>cv. Columbia</strain>
    </source>
</reference>
<reference key="6">
    <citation type="journal article" date="2002" name="Plant Mol. Biol.">
        <title>Genetics of Aux/IAA and ARF action in plant growth and development.</title>
        <authorList>
            <person name="Liscum E."/>
            <person name="Reed J.W."/>
        </authorList>
    </citation>
    <scope>GENE FAMILY</scope>
    <scope>NOMENCLATURE</scope>
    <scope>FUNCTION</scope>
</reference>
<reference key="7">
    <citation type="journal article" date="2004" name="Plant Cell">
        <title>Aux/IAA proteins contain a potent transcriptional repression domain.</title>
        <authorList>
            <person name="Tiwari S.B."/>
            <person name="Hagen G."/>
            <person name="Guilfoyle T.J."/>
        </authorList>
    </citation>
    <scope>TRANSCRIPTIONAL REPRESSION DOMAIN</scope>
</reference>
<reference key="8">
    <citation type="journal article" date="2008" name="Science">
        <title>TOPLESS mediates auxin-dependent transcriptional repression during Arabidopsis embryogenesis.</title>
        <authorList>
            <person name="Szemenyei H."/>
            <person name="Hannon M."/>
            <person name="Long J.A."/>
        </authorList>
    </citation>
    <scope>INTERACTION WITH TPL</scope>
</reference>
<proteinExistence type="evidence at protein level"/>
<sequence>MEGGSASGSASALSNDENLVVSCEDSSSPIGNELELGLTLSLGRKGYRDCRVYADDSSSSSSSSSLSRASVIAGIKRTADSMAATSGQVVGWPPIRTYRMNSMVNQAKASATEDPNLEISQAVNKNRSDSTKMRNSMFVKVTMDGIPIGRKIDLNAHKCYESLSNTLEEMFLKPKLGSRTLETDGHMETPVKILPDGSSGLVLTYEDKEGDWMLVGDVPWGMFIGSVRRLRIMKTSEATGKAQMIL</sequence>
<evidence type="ECO:0000250" key="1"/>
<evidence type="ECO:0000255" key="2">
    <source>
        <dbReference type="PROSITE-ProRule" id="PRU01081"/>
    </source>
</evidence>
<evidence type="ECO:0000269" key="3">
    <source>
    </source>
</evidence>
<evidence type="ECO:0000269" key="4">
    <source>
    </source>
</evidence>
<evidence type="ECO:0000269" key="5">
    <source>
    </source>
</evidence>
<evidence type="ECO:0000305" key="6"/>
<gene>
    <name type="primary">IAA11</name>
    <name type="ordered locus">At4g28640</name>
    <name type="ORF">T5F17.90</name>
</gene>
<protein>
    <recommendedName>
        <fullName>Auxin-responsive protein IAA11</fullName>
    </recommendedName>
    <alternativeName>
        <fullName>Indoleacetic acid-induced protein 11</fullName>
    </alternativeName>
</protein>
<keyword id="KW-0025">Alternative splicing</keyword>
<keyword id="KW-0927">Auxin signaling pathway</keyword>
<keyword id="KW-0539">Nucleus</keyword>
<keyword id="KW-1185">Reference proteome</keyword>
<keyword id="KW-0678">Repressor</keyword>
<keyword id="KW-0804">Transcription</keyword>
<keyword id="KW-0805">Transcription regulation</keyword>
<name>IAA11_ARATH</name>
<feature type="chain" id="PRO_0000112842" description="Auxin-responsive protein IAA11">
    <location>
        <begin position="1"/>
        <end position="246"/>
    </location>
</feature>
<feature type="domain" description="PB1" evidence="2">
    <location>
        <begin position="136"/>
        <end position="235"/>
    </location>
</feature>
<feature type="short sequence motif" description="EAR-like (transcriptional repression)">
    <location>
        <begin position="36"/>
        <end position="40"/>
    </location>
</feature>
<feature type="sequence conflict" description="In Ref. 5; AAM20521/AAN15580." evidence="6" ref="5">
    <original>V</original>
    <variation>I</variation>
    <location>
        <position position="21"/>
    </location>
</feature>
<dbReference type="EMBL" id="U18413">
    <property type="protein sequence ID" value="AAC49052.1"/>
    <property type="molecule type" value="mRNA"/>
</dbReference>
<dbReference type="EMBL" id="AL161573">
    <property type="protein sequence ID" value="CAB81452.1"/>
    <property type="molecule type" value="Genomic_DNA"/>
</dbReference>
<dbReference type="EMBL" id="CP002687">
    <property type="protein sequence ID" value="AEE85515.1"/>
    <property type="molecule type" value="Genomic_DNA"/>
</dbReference>
<dbReference type="EMBL" id="AK118377">
    <property type="protein sequence ID" value="BAC42989.1"/>
    <property type="molecule type" value="mRNA"/>
</dbReference>
<dbReference type="EMBL" id="AF332397">
    <property type="protein sequence ID" value="AAG48761.1"/>
    <property type="molecule type" value="mRNA"/>
</dbReference>
<dbReference type="EMBL" id="AY099670">
    <property type="protein sequence ID" value="AAM20521.1"/>
    <property type="molecule type" value="mRNA"/>
</dbReference>
<dbReference type="EMBL" id="BT000261">
    <property type="protein sequence ID" value="AAN15580.1"/>
    <property type="molecule type" value="mRNA"/>
</dbReference>
<dbReference type="PIR" id="S58497">
    <property type="entry name" value="S58497"/>
</dbReference>
<dbReference type="RefSeq" id="NP_194593.1">
    <molecule id="Q38829-1"/>
    <property type="nucleotide sequence ID" value="NM_119006.3"/>
</dbReference>
<dbReference type="SMR" id="Q38829"/>
<dbReference type="BioGRID" id="14269">
    <property type="interactions" value="69"/>
</dbReference>
<dbReference type="ELM" id="Q38829"/>
<dbReference type="FunCoup" id="Q38829">
    <property type="interactions" value="408"/>
</dbReference>
<dbReference type="IntAct" id="Q38829">
    <property type="interactions" value="64"/>
</dbReference>
<dbReference type="STRING" id="3702.Q38829"/>
<dbReference type="iPTMnet" id="Q38829"/>
<dbReference type="PaxDb" id="3702-AT4G28640.2"/>
<dbReference type="EnsemblPlants" id="AT4G28640.1">
    <molecule id="Q38829-1"/>
    <property type="protein sequence ID" value="AT4G28640.1"/>
    <property type="gene ID" value="AT4G28640"/>
</dbReference>
<dbReference type="GeneID" id="828982"/>
<dbReference type="Gramene" id="AT4G28640.1">
    <molecule id="Q38829-1"/>
    <property type="protein sequence ID" value="AT4G28640.1"/>
    <property type="gene ID" value="AT4G28640"/>
</dbReference>
<dbReference type="KEGG" id="ath:AT4G28640"/>
<dbReference type="Araport" id="AT4G28640"/>
<dbReference type="TAIR" id="AT4G28640">
    <property type="gene designation" value="IAA11"/>
</dbReference>
<dbReference type="eggNOG" id="ENOG502R053">
    <property type="taxonomic scope" value="Eukaryota"/>
</dbReference>
<dbReference type="HOGENOM" id="CLU_049393_3_0_1"/>
<dbReference type="InParanoid" id="Q38829"/>
<dbReference type="OMA" id="TADSMAP"/>
<dbReference type="OrthoDB" id="773336at2759"/>
<dbReference type="PhylomeDB" id="Q38829"/>
<dbReference type="PRO" id="PR:Q38829"/>
<dbReference type="Proteomes" id="UP000006548">
    <property type="component" value="Chromosome 4"/>
</dbReference>
<dbReference type="ExpressionAtlas" id="Q38829">
    <property type="expression patterns" value="baseline and differential"/>
</dbReference>
<dbReference type="GO" id="GO:0005634">
    <property type="term" value="C:nucleus"/>
    <property type="evidence" value="ECO:0007669"/>
    <property type="project" value="UniProtKB-SubCell"/>
</dbReference>
<dbReference type="GO" id="GO:0009734">
    <property type="term" value="P:auxin-activated signaling pathway"/>
    <property type="evidence" value="ECO:0007669"/>
    <property type="project" value="UniProtKB-KW"/>
</dbReference>
<dbReference type="GO" id="GO:0006355">
    <property type="term" value="P:regulation of DNA-templated transcription"/>
    <property type="evidence" value="ECO:0007669"/>
    <property type="project" value="InterPro"/>
</dbReference>
<dbReference type="FunFam" id="3.10.20.90:FF:000078">
    <property type="entry name" value="Auxin-responsive protein"/>
    <property type="match status" value="1"/>
</dbReference>
<dbReference type="Gene3D" id="3.10.20.90">
    <property type="entry name" value="Phosphatidylinositol 3-kinase Catalytic Subunit, Chain A, domain 1"/>
    <property type="match status" value="1"/>
</dbReference>
<dbReference type="InterPro" id="IPR033389">
    <property type="entry name" value="AUX/IAA_dom"/>
</dbReference>
<dbReference type="InterPro" id="IPR003311">
    <property type="entry name" value="AUX_IAA"/>
</dbReference>
<dbReference type="InterPro" id="IPR053793">
    <property type="entry name" value="PB1-like"/>
</dbReference>
<dbReference type="PANTHER" id="PTHR31734:SF6">
    <property type="entry name" value="AUXIN-RESPONSIVE PROTEIN IAA11"/>
    <property type="match status" value="1"/>
</dbReference>
<dbReference type="PANTHER" id="PTHR31734">
    <property type="entry name" value="AUXIN-RESPONSIVE PROTEIN IAA17"/>
    <property type="match status" value="1"/>
</dbReference>
<dbReference type="Pfam" id="PF02309">
    <property type="entry name" value="AUX_IAA"/>
    <property type="match status" value="1"/>
</dbReference>
<dbReference type="SUPFAM" id="SSF54277">
    <property type="entry name" value="CAD &amp; PB1 domains"/>
    <property type="match status" value="1"/>
</dbReference>
<dbReference type="PROSITE" id="PS51745">
    <property type="entry name" value="PB1"/>
    <property type="match status" value="1"/>
</dbReference>
<comment type="function">
    <text evidence="3">Aux/IAA proteins are short-lived transcriptional factors that function as repressors of early auxin response genes at low auxin concentrations. Repression is thought to result from the interaction with auxin response factors (ARFs), proteins that bind to the auxin-responsive promoter element (AuxRE). Formation of heterodimers with ARF proteins may alter their ability to modulate early auxin response genes expression.</text>
</comment>
<comment type="subunit">
    <text evidence="1 4">Homodimers and heterodimers (By similarity). Interacts with TPL.</text>
</comment>
<comment type="interaction">
    <interactant intactId="EBI-2367923">
        <id>Q38829</id>
    </interactant>
    <interactant intactId="EBI-529887">
        <id>Q8RYC8</id>
        <label>ARF19</label>
    </interactant>
    <organismsDiffer>false</organismsDiffer>
    <experiments>3</experiments>
</comment>
<comment type="interaction">
    <interactant intactId="EBI-2367923">
        <id>Q38829</id>
    </interactant>
    <interactant intactId="EBI-4453230">
        <id>O80902</id>
        <label>CIPK22</label>
    </interactant>
    <organismsDiffer>false</organismsDiffer>
    <experiments>4</experiments>
</comment>
<comment type="interaction">
    <interactant intactId="EBI-2367923">
        <id>Q38829</id>
    </interactant>
    <interactant intactId="EBI-1787347">
        <id>Q94AY3</id>
        <label>DRIP2</label>
    </interactant>
    <organismsDiffer>false</organismsDiffer>
    <experiments>3</experiments>
</comment>
<comment type="interaction">
    <interactant intactId="EBI-2367923">
        <id>Q38829</id>
    </interactant>
    <interactant intactId="EBI-630505">
        <id>P49677</id>
        <label>IAA1</label>
    </interactant>
    <organismsDiffer>false</organismsDiffer>
    <experiments>5</experiments>
</comment>
<comment type="interaction">
    <interactant intactId="EBI-2367923">
        <id>Q38829</id>
    </interactant>
    <interactant intactId="EBI-3946434">
        <id>Q38828</id>
        <label>IAA10</label>
    </interactant>
    <organismsDiffer>false</organismsDiffer>
    <experiments>6</experiments>
</comment>
<comment type="interaction">
    <interactant intactId="EBI-2367923">
        <id>Q38829</id>
    </interactant>
    <interactant intactId="EBI-1554143">
        <id>Q38831</id>
        <label>IAA13</label>
    </interactant>
    <organismsDiffer>false</organismsDiffer>
    <experiments>6</experiments>
</comment>
<comment type="interaction">
    <interactant intactId="EBI-2367923">
        <id>Q38829</id>
    </interactant>
    <interactant intactId="EBI-25524519">
        <id>A0A2H1ZEF6</id>
        <label>IAA15</label>
    </interactant>
    <organismsDiffer>false</organismsDiffer>
    <experiments>3</experiments>
</comment>
<comment type="interaction">
    <interactant intactId="EBI-2367923">
        <id>Q38829</id>
    </interactant>
    <interactant intactId="EBI-632231">
        <id>O24407</id>
        <label>IAA16</label>
    </interactant>
    <organismsDiffer>false</organismsDiffer>
    <experiments>8</experiments>
</comment>
<comment type="interaction">
    <interactant intactId="EBI-2367923">
        <id>Q38829</id>
    </interactant>
    <interactant intactId="EBI-632243">
        <id>P93830</id>
        <label>IAA17</label>
    </interactant>
    <organismsDiffer>false</organismsDiffer>
    <experiments>8</experiments>
</comment>
<comment type="interaction">
    <interactant intactId="EBI-2367923">
        <id>Q38829</id>
    </interactant>
    <interactant intactId="EBI-632257">
        <id>O24409</id>
        <label>IAA19</label>
    </interactant>
    <organismsDiffer>false</organismsDiffer>
    <experiments>7</experiments>
</comment>
<comment type="interaction">
    <interactant intactId="EBI-2367923">
        <id>Q38829</id>
    </interactant>
    <interactant intactId="EBI-632343">
        <id>P49678</id>
        <label>IAA2</label>
    </interactant>
    <organismsDiffer>false</organismsDiffer>
    <experiments>6</experiments>
</comment>
<comment type="interaction">
    <interactant intactId="EBI-2367923">
        <id>Q38829</id>
    </interactant>
    <interactant intactId="EBI-632272">
        <id>O24410</id>
        <label>IAA20</label>
    </interactant>
    <organismsDiffer>false</organismsDiffer>
    <experiments>3</experiments>
</comment>
<comment type="interaction">
    <interactant intactId="EBI-2367923">
        <id>Q38829</id>
    </interactant>
    <interactant intactId="EBI-3947418">
        <id>Q8LAL2</id>
        <label>IAA26</label>
    </interactant>
    <organismsDiffer>false</organismsDiffer>
    <experiments>8</experiments>
</comment>
<comment type="interaction">
    <interactant intactId="EBI-2367923">
        <id>Q38829</id>
    </interactant>
    <interactant intactId="EBI-3946677">
        <id>Q9ZSY8</id>
        <label>IAA27</label>
    </interactant>
    <organismsDiffer>false</organismsDiffer>
    <experiments>7</experiments>
</comment>
<comment type="interaction">
    <interactant intactId="EBI-2367923">
        <id>Q38829</id>
    </interactant>
    <interactant intactId="EBI-3133404">
        <id>Q9XFM0</id>
        <label>IAA28</label>
    </interactant>
    <organismsDiffer>false</organismsDiffer>
    <experiments>9</experiments>
</comment>
<comment type="interaction">
    <interactant intactId="EBI-2367923">
        <id>Q38829</id>
    </interactant>
    <interactant intactId="EBI-307174">
        <id>Q38822</id>
        <label>IAA3</label>
    </interactant>
    <organismsDiffer>false</organismsDiffer>
    <experiments>7</experiments>
</comment>
<comment type="interaction">
    <interactant intactId="EBI-2367923">
        <id>Q38829</id>
    </interactant>
    <interactant intactId="EBI-3946408">
        <id>Q8H174</id>
        <label>IAA31</label>
    </interactant>
    <organismsDiffer>false</organismsDiffer>
    <experiments>8</experiments>
</comment>
<comment type="interaction">
    <interactant intactId="EBI-2367923">
        <id>Q38829</id>
    </interactant>
    <interactant intactId="EBI-632187">
        <id>P33077</id>
        <label>IAA4</label>
    </interactant>
    <organismsDiffer>false</organismsDiffer>
    <experiments>7</experiments>
</comment>
<comment type="interaction">
    <interactant intactId="EBI-2367923">
        <id>Q38829</id>
    </interactant>
    <interactant intactId="EBI-1554124">
        <id>Q38824</id>
        <label>IAA6</label>
    </interactant>
    <organismsDiffer>false</organismsDiffer>
    <experiments>7</experiments>
</comment>
<comment type="interaction">
    <interactant intactId="EBI-2367923">
        <id>Q38829</id>
    </interactant>
    <interactant intactId="EBI-602959">
        <id>Q38825</id>
        <label>IAA7</label>
    </interactant>
    <organismsDiffer>false</organismsDiffer>
    <experiments>3</experiments>
</comment>
<comment type="interaction">
    <interactant intactId="EBI-2367923">
        <id>Q38829</id>
    </interactant>
    <interactant intactId="EBI-632200">
        <id>Q38826</id>
        <label>IAA8</label>
    </interactant>
    <organismsDiffer>false</organismsDiffer>
    <experiments>6</experiments>
</comment>
<comment type="interaction">
    <interactant intactId="EBI-2367923">
        <id>Q38829</id>
    </interactant>
    <interactant intactId="EBI-1238013">
        <id>O22179</id>
        <label>MYB70</label>
    </interactant>
    <organismsDiffer>false</organismsDiffer>
    <experiments>3</experiments>
</comment>
<comment type="interaction">
    <interactant intactId="EBI-2367923">
        <id>Q38829</id>
    </interactant>
    <interactant intactId="EBI-963647">
        <id>Q9C8Y3</id>
        <label>RGL1</label>
    </interactant>
    <organismsDiffer>false</organismsDiffer>
    <experiments>3</experiments>
</comment>
<comment type="interaction">
    <interactant intactId="EBI-2367923">
        <id>Q38829</id>
    </interactant>
    <interactant intactId="EBI-15191543">
        <id>Q05153</id>
        <label>SSRP1</label>
    </interactant>
    <organismsDiffer>false</organismsDiffer>
    <experiments>3</experiments>
</comment>
<comment type="subcellular location">
    <subcellularLocation>
        <location evidence="1">Nucleus</location>
    </subcellularLocation>
</comment>
<comment type="alternative products">
    <event type="alternative splicing"/>
    <isoform>
        <id>Q38829-1</id>
        <name>1</name>
        <sequence type="displayed"/>
    </isoform>
    <text>A number of isoforms are produced. According to EST sequences.</text>
</comment>
<comment type="tissue specificity">
    <text evidence="5">Preferentially expressed in stems and flowers.</text>
</comment>
<comment type="induction">
    <text evidence="5">By auxin.</text>
</comment>
<comment type="domain">
    <text>The N-terminal half of the protein contains two conserved domains I and II. Domain I includes a slightly degenerated ERF-associated amphiphilic repression (EAR) motif which seems to be involved in the activity of transcriptional repression. Domain II is required for the correct degradation of the protein through the SCF-mediated ubiquitin-proteasome pathway. Interactions between Aux/IAA proteins and auxin response factors (ARFs) occur through their C-terminal dimerization domains III and IV.</text>
</comment>
<comment type="similarity">
    <text evidence="6">Belongs to the Aux/IAA family.</text>
</comment>
<organism>
    <name type="scientific">Arabidopsis thaliana</name>
    <name type="common">Mouse-ear cress</name>
    <dbReference type="NCBI Taxonomy" id="3702"/>
    <lineage>
        <taxon>Eukaryota</taxon>
        <taxon>Viridiplantae</taxon>
        <taxon>Streptophyta</taxon>
        <taxon>Embryophyta</taxon>
        <taxon>Tracheophyta</taxon>
        <taxon>Spermatophyta</taxon>
        <taxon>Magnoliopsida</taxon>
        <taxon>eudicotyledons</taxon>
        <taxon>Gunneridae</taxon>
        <taxon>Pentapetalae</taxon>
        <taxon>rosids</taxon>
        <taxon>malvids</taxon>
        <taxon>Brassicales</taxon>
        <taxon>Brassicaceae</taxon>
        <taxon>Camelineae</taxon>
        <taxon>Arabidopsis</taxon>
    </lineage>
</organism>